<proteinExistence type="inferred from homology"/>
<dbReference type="EC" id="3.1.3.71" evidence="1"/>
<dbReference type="EMBL" id="AP006840">
    <property type="protein sequence ID" value="BAD40696.1"/>
    <property type="molecule type" value="Genomic_DNA"/>
</dbReference>
<dbReference type="SMR" id="Q67NP7"/>
<dbReference type="STRING" id="292459.STH1711"/>
<dbReference type="KEGG" id="sth:STH1711"/>
<dbReference type="eggNOG" id="COG2045">
    <property type="taxonomic scope" value="Bacteria"/>
</dbReference>
<dbReference type="HOGENOM" id="CLU_070028_0_0_9"/>
<dbReference type="Proteomes" id="UP000000417">
    <property type="component" value="Chromosome"/>
</dbReference>
<dbReference type="GO" id="GO:0050532">
    <property type="term" value="F:2-phosphosulfolactate phosphatase activity"/>
    <property type="evidence" value="ECO:0007669"/>
    <property type="project" value="UniProtKB-UniRule"/>
</dbReference>
<dbReference type="GO" id="GO:0000287">
    <property type="term" value="F:magnesium ion binding"/>
    <property type="evidence" value="ECO:0007669"/>
    <property type="project" value="UniProtKB-UniRule"/>
</dbReference>
<dbReference type="GO" id="GO:0050545">
    <property type="term" value="F:sulfopyruvate decarboxylase activity"/>
    <property type="evidence" value="ECO:0007669"/>
    <property type="project" value="TreeGrafter"/>
</dbReference>
<dbReference type="FunFam" id="3.90.1560.10:FF:000001">
    <property type="entry name" value="Probable 2-phosphosulfolactate phosphatase"/>
    <property type="match status" value="1"/>
</dbReference>
<dbReference type="Gene3D" id="3.90.1560.10">
    <property type="entry name" value="ComB-like"/>
    <property type="match status" value="1"/>
</dbReference>
<dbReference type="HAMAP" id="MF_00490">
    <property type="entry name" value="ComB"/>
    <property type="match status" value="1"/>
</dbReference>
<dbReference type="InterPro" id="IPR005238">
    <property type="entry name" value="ComB-like"/>
</dbReference>
<dbReference type="InterPro" id="IPR036702">
    <property type="entry name" value="ComB-like_sf"/>
</dbReference>
<dbReference type="PANTHER" id="PTHR37311">
    <property type="entry name" value="2-PHOSPHOSULFOLACTATE PHOSPHATASE-RELATED"/>
    <property type="match status" value="1"/>
</dbReference>
<dbReference type="PANTHER" id="PTHR37311:SF1">
    <property type="entry name" value="2-PHOSPHOSULFOLACTATE PHOSPHATASE-RELATED"/>
    <property type="match status" value="1"/>
</dbReference>
<dbReference type="Pfam" id="PF04029">
    <property type="entry name" value="2-ph_phosp"/>
    <property type="match status" value="1"/>
</dbReference>
<dbReference type="SUPFAM" id="SSF142823">
    <property type="entry name" value="ComB-like"/>
    <property type="match status" value="1"/>
</dbReference>
<comment type="catalytic activity">
    <reaction evidence="1">
        <text>(2R)-O-phospho-3-sulfolactate + H2O = (2R)-3-sulfolactate + phosphate</text>
        <dbReference type="Rhea" id="RHEA:23416"/>
        <dbReference type="ChEBI" id="CHEBI:15377"/>
        <dbReference type="ChEBI" id="CHEBI:15597"/>
        <dbReference type="ChEBI" id="CHEBI:43474"/>
        <dbReference type="ChEBI" id="CHEBI:58738"/>
        <dbReference type="EC" id="3.1.3.71"/>
    </reaction>
</comment>
<comment type="cofactor">
    <cofactor evidence="1">
        <name>Mg(2+)</name>
        <dbReference type="ChEBI" id="CHEBI:18420"/>
    </cofactor>
</comment>
<comment type="similarity">
    <text evidence="1">Belongs to the ComB family.</text>
</comment>
<protein>
    <recommendedName>
        <fullName evidence="1">Probable 2-phosphosulfolactate phosphatase</fullName>
        <ecNumber evidence="1">3.1.3.71</ecNumber>
    </recommendedName>
</protein>
<reference key="1">
    <citation type="journal article" date="2004" name="Nucleic Acids Res.">
        <title>Genome sequence of Symbiobacterium thermophilum, an uncultivable bacterium that depends on microbial commensalism.</title>
        <authorList>
            <person name="Ueda K."/>
            <person name="Yamashita A."/>
            <person name="Ishikawa J."/>
            <person name="Shimada M."/>
            <person name="Watsuji T."/>
            <person name="Morimura K."/>
            <person name="Ikeda H."/>
            <person name="Hattori M."/>
            <person name="Beppu T."/>
        </authorList>
    </citation>
    <scope>NUCLEOTIDE SEQUENCE [LARGE SCALE GENOMIC DNA]</scope>
    <source>
        <strain>DSM 24528 / JCM 14929 / IAM 14863 / T</strain>
    </source>
</reference>
<feature type="chain" id="PRO_0000081473" description="Probable 2-phosphosulfolactate phosphatase">
    <location>
        <begin position="1"/>
        <end position="233"/>
    </location>
</feature>
<name>COMB_SYMTH</name>
<evidence type="ECO:0000255" key="1">
    <source>
        <dbReference type="HAMAP-Rule" id="MF_00490"/>
    </source>
</evidence>
<keyword id="KW-0378">Hydrolase</keyword>
<keyword id="KW-0460">Magnesium</keyword>
<keyword id="KW-1185">Reference proteome</keyword>
<accession>Q67NP7</accession>
<sequence length="233" mass="25210">MVNIPPAEELAGRVAVVIDVLRATTTICTALANGADTVVPILSPEEAFQVARDNPDRQFLLGGERKAVLIPGFHCDNSPLEYTEARVKGRPILFTTTNGTRAIRRAAGADRVYIASLLNAPAVGRELARLEVDVAICCAGTHDQFSLEDTVCAGAILEYMAGPDRPVETNDMGLVARELFRRYDGRLADLLHLSSHGQNLVRLGMQDDLLFCAQLGTLTILPVFTEGQVVLLE</sequence>
<organism>
    <name type="scientific">Symbiobacterium thermophilum (strain DSM 24528 / JCM 14929 / IAM 14863 / T)</name>
    <dbReference type="NCBI Taxonomy" id="292459"/>
    <lineage>
        <taxon>Bacteria</taxon>
        <taxon>Bacillati</taxon>
        <taxon>Bacillota</taxon>
        <taxon>Clostridia</taxon>
        <taxon>Eubacteriales</taxon>
        <taxon>Symbiobacteriaceae</taxon>
        <taxon>Symbiobacterium</taxon>
    </lineage>
</organism>
<gene>
    <name evidence="1" type="primary">comB</name>
    <name type="ordered locus">STH1711</name>
</gene>